<sequence>MRSQDLHQRLADLGAKPLHCGRIVRAWLQGRALDACTARQRAEDFLPLSVRQGLPRVAEELEGIARLHSEHPASDGSSRLLVELADRQRVESVLLPRGGLCVSTQVGCAVGCVFCMTGRSGLLRQVGSLEMVAQVVLARRRRAVKKVVFMGMGEPAHNLDNVLEAIDLLGTDGGIGHKNLVFSTVGDPRVFERLPGQRVKPALALSLHSTDAELRRRLLPKAPPLSPEELVEAGETYARQVDYPIQYQWTLLEGVNDSLEEMDGILRLLKGRFAVMNLIPYNSMDGDAYRRPRGERIVELVRYLHSRGVLTKVRNSAGQDIDGGCGQLRARAEGAAPQRHIRVRRG</sequence>
<gene>
    <name type="ordered locus">PSPA7_3453</name>
</gene>
<evidence type="ECO:0000250" key="1"/>
<evidence type="ECO:0000255" key="2"/>
<evidence type="ECO:0000255" key="3">
    <source>
        <dbReference type="PROSITE-ProRule" id="PRU01266"/>
    </source>
</evidence>
<evidence type="ECO:0000305" key="4"/>
<organism>
    <name type="scientific">Pseudomonas paraeruginosa (strain DSM 24068 / PA7)</name>
    <name type="common">Pseudomonas aeruginosa (strain PA7)</name>
    <dbReference type="NCBI Taxonomy" id="381754"/>
    <lineage>
        <taxon>Bacteria</taxon>
        <taxon>Pseudomonadati</taxon>
        <taxon>Pseudomonadota</taxon>
        <taxon>Gammaproteobacteria</taxon>
        <taxon>Pseudomonadales</taxon>
        <taxon>Pseudomonadaceae</taxon>
        <taxon>Pseudomonas</taxon>
        <taxon>Pseudomonas paraeruginosa</taxon>
    </lineage>
</organism>
<reference key="1">
    <citation type="submission" date="2007-06" db="EMBL/GenBank/DDBJ databases">
        <authorList>
            <person name="Dodson R.J."/>
            <person name="Harkins D."/>
            <person name="Paulsen I.T."/>
        </authorList>
    </citation>
    <scope>NUCLEOTIDE SEQUENCE [LARGE SCALE GENOMIC DNA]</scope>
    <source>
        <strain>DSM 24068 / PA7</strain>
    </source>
</reference>
<proteinExistence type="inferred from homology"/>
<feature type="chain" id="PRO_0000350332" description="Probable RNA methyltransferase PSPA7_3453">
    <location>
        <begin position="1"/>
        <end position="346"/>
    </location>
</feature>
<feature type="domain" description="Radical SAM core" evidence="3">
    <location>
        <begin position="94"/>
        <end position="320"/>
    </location>
</feature>
<feature type="active site" description="Proton acceptor" evidence="2">
    <location>
        <position position="91"/>
    </location>
</feature>
<feature type="active site" description="S-methylcysteine intermediate" evidence="1">
    <location>
        <position position="325"/>
    </location>
</feature>
<feature type="binding site" evidence="1">
    <location>
        <position position="108"/>
    </location>
    <ligand>
        <name>[4Fe-4S] cluster</name>
        <dbReference type="ChEBI" id="CHEBI:49883"/>
        <note>4Fe-4S-S-AdoMet</note>
    </ligand>
</feature>
<feature type="binding site" evidence="1">
    <location>
        <position position="112"/>
    </location>
    <ligand>
        <name>[4Fe-4S] cluster</name>
        <dbReference type="ChEBI" id="CHEBI:49883"/>
        <note>4Fe-4S-S-AdoMet</note>
    </ligand>
</feature>
<feature type="binding site" evidence="1">
    <location>
        <position position="115"/>
    </location>
    <ligand>
        <name>[4Fe-4S] cluster</name>
        <dbReference type="ChEBI" id="CHEBI:49883"/>
        <note>4Fe-4S-S-AdoMet</note>
    </ligand>
</feature>
<feature type="binding site" evidence="1">
    <location>
        <begin position="153"/>
        <end position="154"/>
    </location>
    <ligand>
        <name>S-adenosyl-L-methionine</name>
        <dbReference type="ChEBI" id="CHEBI:59789"/>
    </ligand>
</feature>
<feature type="binding site" evidence="1">
    <location>
        <position position="183"/>
    </location>
    <ligand>
        <name>S-adenosyl-L-methionine</name>
        <dbReference type="ChEBI" id="CHEBI:59789"/>
    </ligand>
</feature>
<feature type="binding site" evidence="1">
    <location>
        <begin position="206"/>
        <end position="208"/>
    </location>
    <ligand>
        <name>S-adenosyl-L-methionine</name>
        <dbReference type="ChEBI" id="CHEBI:59789"/>
    </ligand>
</feature>
<feature type="binding site" evidence="1">
    <location>
        <position position="282"/>
    </location>
    <ligand>
        <name>S-adenosyl-L-methionine</name>
        <dbReference type="ChEBI" id="CHEBI:59789"/>
    </ligand>
</feature>
<feature type="disulfide bond" description="(transient)" evidence="1">
    <location>
        <begin position="101"/>
        <end position="325"/>
    </location>
</feature>
<dbReference type="EC" id="2.1.1.-"/>
<dbReference type="EMBL" id="CP000744">
    <property type="protein sequence ID" value="ABR82142.1"/>
    <property type="molecule type" value="Genomic_DNA"/>
</dbReference>
<dbReference type="RefSeq" id="WP_012076146.1">
    <property type="nucleotide sequence ID" value="NC_009656.1"/>
</dbReference>
<dbReference type="SMR" id="A6V6X8"/>
<dbReference type="KEGG" id="pap:PSPA7_3453"/>
<dbReference type="HOGENOM" id="CLU_029101_3_3_6"/>
<dbReference type="Proteomes" id="UP000001582">
    <property type="component" value="Chromosome"/>
</dbReference>
<dbReference type="GO" id="GO:0005737">
    <property type="term" value="C:cytoplasm"/>
    <property type="evidence" value="ECO:0007669"/>
    <property type="project" value="UniProtKB-SubCell"/>
</dbReference>
<dbReference type="GO" id="GO:0051539">
    <property type="term" value="F:4 iron, 4 sulfur cluster binding"/>
    <property type="evidence" value="ECO:0007669"/>
    <property type="project" value="UniProtKB-KW"/>
</dbReference>
<dbReference type="GO" id="GO:0046872">
    <property type="term" value="F:metal ion binding"/>
    <property type="evidence" value="ECO:0007669"/>
    <property type="project" value="UniProtKB-KW"/>
</dbReference>
<dbReference type="GO" id="GO:0008173">
    <property type="term" value="F:RNA methyltransferase activity"/>
    <property type="evidence" value="ECO:0007669"/>
    <property type="project" value="InterPro"/>
</dbReference>
<dbReference type="GO" id="GO:0070475">
    <property type="term" value="P:rRNA base methylation"/>
    <property type="evidence" value="ECO:0007669"/>
    <property type="project" value="TreeGrafter"/>
</dbReference>
<dbReference type="GO" id="GO:0030488">
    <property type="term" value="P:tRNA methylation"/>
    <property type="evidence" value="ECO:0007669"/>
    <property type="project" value="TreeGrafter"/>
</dbReference>
<dbReference type="CDD" id="cd01335">
    <property type="entry name" value="Radical_SAM"/>
    <property type="match status" value="1"/>
</dbReference>
<dbReference type="FunFam" id="3.20.20.70:FF:000315">
    <property type="entry name" value="Probable RNA methyltransferase PA14_40730"/>
    <property type="match status" value="1"/>
</dbReference>
<dbReference type="Gene3D" id="3.20.20.70">
    <property type="entry name" value="Aldolase class I"/>
    <property type="match status" value="1"/>
</dbReference>
<dbReference type="InterPro" id="IPR013785">
    <property type="entry name" value="Aldolase_TIM"/>
</dbReference>
<dbReference type="InterPro" id="IPR040072">
    <property type="entry name" value="Methyltransferase_A"/>
</dbReference>
<dbReference type="InterPro" id="IPR004383">
    <property type="entry name" value="rRNA_lsu_MTrfase_RlmN/Cfr"/>
</dbReference>
<dbReference type="InterPro" id="IPR007197">
    <property type="entry name" value="rSAM"/>
</dbReference>
<dbReference type="NCBIfam" id="NF011034">
    <property type="entry name" value="PRK14464.1"/>
    <property type="match status" value="1"/>
</dbReference>
<dbReference type="PANTHER" id="PTHR30544">
    <property type="entry name" value="23S RRNA METHYLTRANSFERASE"/>
    <property type="match status" value="1"/>
</dbReference>
<dbReference type="PANTHER" id="PTHR30544:SF5">
    <property type="entry name" value="RADICAL SAM CORE DOMAIN-CONTAINING PROTEIN"/>
    <property type="match status" value="1"/>
</dbReference>
<dbReference type="Pfam" id="PF04055">
    <property type="entry name" value="Radical_SAM"/>
    <property type="match status" value="1"/>
</dbReference>
<dbReference type="PIRSF" id="PIRSF006004">
    <property type="entry name" value="CHP00048"/>
    <property type="match status" value="1"/>
</dbReference>
<dbReference type="SFLD" id="SFLDF00275">
    <property type="entry name" value="adenosine_C2_methyltransferase"/>
    <property type="match status" value="1"/>
</dbReference>
<dbReference type="SFLD" id="SFLDS00029">
    <property type="entry name" value="Radical_SAM"/>
    <property type="match status" value="1"/>
</dbReference>
<dbReference type="SUPFAM" id="SSF102114">
    <property type="entry name" value="Radical SAM enzymes"/>
    <property type="match status" value="1"/>
</dbReference>
<dbReference type="PROSITE" id="PS51918">
    <property type="entry name" value="RADICAL_SAM"/>
    <property type="match status" value="1"/>
</dbReference>
<keyword id="KW-0004">4Fe-4S</keyword>
<keyword id="KW-0963">Cytoplasm</keyword>
<keyword id="KW-1015">Disulfide bond</keyword>
<keyword id="KW-0408">Iron</keyword>
<keyword id="KW-0411">Iron-sulfur</keyword>
<keyword id="KW-0479">Metal-binding</keyword>
<keyword id="KW-0489">Methyltransferase</keyword>
<keyword id="KW-0949">S-adenosyl-L-methionine</keyword>
<keyword id="KW-0808">Transferase</keyword>
<accession>A6V6X8</accession>
<name>Y3453_PSEP7</name>
<comment type="cofactor">
    <cofactor evidence="1">
        <name>[4Fe-4S] cluster</name>
        <dbReference type="ChEBI" id="CHEBI:49883"/>
    </cofactor>
    <text evidence="1">Binds 1 [4Fe-4S] cluster. The cluster is coordinated with 3 cysteines and an exchangeable S-adenosyl-L-methionine.</text>
</comment>
<comment type="subcellular location">
    <subcellularLocation>
        <location evidence="4">Cytoplasm</location>
    </subcellularLocation>
</comment>
<comment type="similarity">
    <text evidence="4">Belongs to the radical SAM superfamily. RlmN family.</text>
</comment>
<protein>
    <recommendedName>
        <fullName>Probable RNA methyltransferase PSPA7_3453</fullName>
        <ecNumber>2.1.1.-</ecNumber>
    </recommendedName>
</protein>